<evidence type="ECO:0000255" key="1">
    <source>
        <dbReference type="PROSITE-ProRule" id="PRU00303"/>
    </source>
</evidence>
<evidence type="ECO:0000256" key="2">
    <source>
        <dbReference type="SAM" id="MobiDB-lite"/>
    </source>
</evidence>
<protein>
    <recommendedName>
        <fullName>Uncharacterized protein YfhG</fullName>
    </recommendedName>
</protein>
<accession>P0AD46</accession>
<accession>P37328</accession>
<accession>P76997</accession>
<keyword id="KW-1185">Reference proteome</keyword>
<keyword id="KW-0732">Signal</keyword>
<organism>
    <name type="scientific">Shigella flexneri</name>
    <dbReference type="NCBI Taxonomy" id="623"/>
    <lineage>
        <taxon>Bacteria</taxon>
        <taxon>Pseudomonadati</taxon>
        <taxon>Pseudomonadota</taxon>
        <taxon>Gammaproteobacteria</taxon>
        <taxon>Enterobacterales</taxon>
        <taxon>Enterobacteriaceae</taxon>
        <taxon>Shigella</taxon>
    </lineage>
</organism>
<proteinExistence type="inferred from homology"/>
<feature type="signal peptide" evidence="1">
    <location>
        <begin position="1"/>
        <end position="25"/>
    </location>
</feature>
<feature type="chain" id="PRO_0000169251" description="Uncharacterized protein YfhG">
    <location>
        <begin position="26"/>
        <end position="237"/>
    </location>
</feature>
<feature type="region of interest" description="Disordered" evidence="2">
    <location>
        <begin position="201"/>
        <end position="237"/>
    </location>
</feature>
<name>YFHG_SHIFL</name>
<dbReference type="EMBL" id="AE005674">
    <property type="protein sequence ID" value="AAN44099.2"/>
    <property type="molecule type" value="Genomic_DNA"/>
</dbReference>
<dbReference type="EMBL" id="AE014073">
    <property type="protein sequence ID" value="AAP17923.1"/>
    <property type="molecule type" value="Genomic_DNA"/>
</dbReference>
<dbReference type="RefSeq" id="NP_708392.2">
    <property type="nucleotide sequence ID" value="NC_004337.2"/>
</dbReference>
<dbReference type="SMR" id="P0AD46"/>
<dbReference type="STRING" id="198214.SF2602"/>
<dbReference type="PaxDb" id="198214-SF2602"/>
<dbReference type="GeneID" id="1023594"/>
<dbReference type="KEGG" id="sfl:SF2602"/>
<dbReference type="KEGG" id="sfx:S2774"/>
<dbReference type="PATRIC" id="fig|198214.7.peg.3107"/>
<dbReference type="HOGENOM" id="CLU_068067_1_0_6"/>
<dbReference type="Proteomes" id="UP000001006">
    <property type="component" value="Chromosome"/>
</dbReference>
<dbReference type="Proteomes" id="UP000002673">
    <property type="component" value="Chromosome"/>
</dbReference>
<dbReference type="InterPro" id="IPR025262">
    <property type="entry name" value="QseG"/>
</dbReference>
<dbReference type="NCBIfam" id="NF007997">
    <property type="entry name" value="PRK10722.1"/>
    <property type="match status" value="1"/>
</dbReference>
<dbReference type="Pfam" id="PF13942">
    <property type="entry name" value="Lipoprotein_20"/>
    <property type="match status" value="1"/>
</dbReference>
<dbReference type="PROSITE" id="PS51257">
    <property type="entry name" value="PROKAR_LIPOPROTEIN"/>
    <property type="match status" value="1"/>
</dbReference>
<gene>
    <name type="primary">yfhG</name>
    <name type="ordered locus">SF2602</name>
    <name type="ordered locus">S2774</name>
</gene>
<reference key="1">
    <citation type="journal article" date="2002" name="Nucleic Acids Res.">
        <title>Genome sequence of Shigella flexneri 2a: insights into pathogenicity through comparison with genomes of Escherichia coli K12 and O157.</title>
        <authorList>
            <person name="Jin Q."/>
            <person name="Yuan Z."/>
            <person name="Xu J."/>
            <person name="Wang Y."/>
            <person name="Shen Y."/>
            <person name="Lu W."/>
            <person name="Wang J."/>
            <person name="Liu H."/>
            <person name="Yang J."/>
            <person name="Yang F."/>
            <person name="Zhang X."/>
            <person name="Zhang J."/>
            <person name="Yang G."/>
            <person name="Wu H."/>
            <person name="Qu D."/>
            <person name="Dong J."/>
            <person name="Sun L."/>
            <person name="Xue Y."/>
            <person name="Zhao A."/>
            <person name="Gao Y."/>
            <person name="Zhu J."/>
            <person name="Kan B."/>
            <person name="Ding K."/>
            <person name="Chen S."/>
            <person name="Cheng H."/>
            <person name="Yao Z."/>
            <person name="He B."/>
            <person name="Chen R."/>
            <person name="Ma D."/>
            <person name="Qiang B."/>
            <person name="Wen Y."/>
            <person name="Hou Y."/>
            <person name="Yu J."/>
        </authorList>
    </citation>
    <scope>NUCLEOTIDE SEQUENCE [LARGE SCALE GENOMIC DNA]</scope>
    <source>
        <strain>301 / Serotype 2a</strain>
    </source>
</reference>
<reference key="2">
    <citation type="journal article" date="2003" name="Infect. Immun.">
        <title>Complete genome sequence and comparative genomics of Shigella flexneri serotype 2a strain 2457T.</title>
        <authorList>
            <person name="Wei J."/>
            <person name="Goldberg M.B."/>
            <person name="Burland V."/>
            <person name="Venkatesan M.M."/>
            <person name="Deng W."/>
            <person name="Fournier G."/>
            <person name="Mayhew G.F."/>
            <person name="Plunkett G. III"/>
            <person name="Rose D.J."/>
            <person name="Darling A."/>
            <person name="Mau B."/>
            <person name="Perna N.T."/>
            <person name="Payne S.M."/>
            <person name="Runyen-Janecky L.J."/>
            <person name="Zhou S."/>
            <person name="Schwartz D.C."/>
            <person name="Blattner F.R."/>
        </authorList>
    </citation>
    <scope>NUCLEOTIDE SEQUENCE [LARGE SCALE GENOMIC DNA]</scope>
    <source>
        <strain>ATCC 700930 / 2457T / Serotype 2a</strain>
    </source>
</reference>
<sequence>MRHIFQRLLPRRLWLAGLPCLALLGCVQNHNKPAIDTPAEEKIPVYQLADYLSTECSDIWALQGKSTETNPLYWLRAMDCADRLMPAQSRQQARQYDDGSWQNTFKQGILLADAKITPYERRQLVARIEALSTEIPAQVRPLYQLWRDGQALQLQLAEERQRYSKLQQSSDSELDTLRQQHHVLQQQLELTTRKLENLTDIERQLSTRKPAGNFSPDTPHESEKPAPSTHEVTPDEP</sequence>